<gene>
    <name evidence="1" type="primary">argR</name>
    <name type="ordered locus">SE_1201</name>
</gene>
<evidence type="ECO:0000255" key="1">
    <source>
        <dbReference type="HAMAP-Rule" id="MF_00173"/>
    </source>
</evidence>
<evidence type="ECO:0000305" key="2"/>
<protein>
    <recommendedName>
        <fullName evidence="1">Arginine repressor</fullName>
    </recommendedName>
</protein>
<feature type="chain" id="PRO_0000205120" description="Arginine repressor">
    <location>
        <begin position="1"/>
        <end position="150"/>
    </location>
</feature>
<accession>Q8CP40</accession>
<proteinExistence type="inferred from homology"/>
<dbReference type="EMBL" id="AE015929">
    <property type="protein sequence ID" value="AAO04800.1"/>
    <property type="status" value="ALT_INIT"/>
    <property type="molecule type" value="Genomic_DNA"/>
</dbReference>
<dbReference type="RefSeq" id="NP_764756.1">
    <property type="nucleotide sequence ID" value="NC_004461.1"/>
</dbReference>
<dbReference type="RefSeq" id="WP_002456185.1">
    <property type="nucleotide sequence ID" value="NZ_WBME01000006.1"/>
</dbReference>
<dbReference type="SMR" id="Q8CP40"/>
<dbReference type="GeneID" id="50018681"/>
<dbReference type="KEGG" id="sep:SE_1201"/>
<dbReference type="PATRIC" id="fig|176280.10.peg.1171"/>
<dbReference type="eggNOG" id="COG1438">
    <property type="taxonomic scope" value="Bacteria"/>
</dbReference>
<dbReference type="HOGENOM" id="CLU_097103_3_0_9"/>
<dbReference type="OrthoDB" id="9807089at2"/>
<dbReference type="UniPathway" id="UPA00068"/>
<dbReference type="Proteomes" id="UP000001411">
    <property type="component" value="Chromosome"/>
</dbReference>
<dbReference type="GO" id="GO:0005737">
    <property type="term" value="C:cytoplasm"/>
    <property type="evidence" value="ECO:0007669"/>
    <property type="project" value="UniProtKB-SubCell"/>
</dbReference>
<dbReference type="GO" id="GO:0034618">
    <property type="term" value="F:arginine binding"/>
    <property type="evidence" value="ECO:0007669"/>
    <property type="project" value="InterPro"/>
</dbReference>
<dbReference type="GO" id="GO:0003677">
    <property type="term" value="F:DNA binding"/>
    <property type="evidence" value="ECO:0007669"/>
    <property type="project" value="UniProtKB-KW"/>
</dbReference>
<dbReference type="GO" id="GO:0003700">
    <property type="term" value="F:DNA-binding transcription factor activity"/>
    <property type="evidence" value="ECO:0007669"/>
    <property type="project" value="UniProtKB-UniRule"/>
</dbReference>
<dbReference type="GO" id="GO:0006526">
    <property type="term" value="P:L-arginine biosynthetic process"/>
    <property type="evidence" value="ECO:0007669"/>
    <property type="project" value="UniProtKB-UniPathway"/>
</dbReference>
<dbReference type="GO" id="GO:0051259">
    <property type="term" value="P:protein complex oligomerization"/>
    <property type="evidence" value="ECO:0007669"/>
    <property type="project" value="InterPro"/>
</dbReference>
<dbReference type="GO" id="GO:1900079">
    <property type="term" value="P:regulation of arginine biosynthetic process"/>
    <property type="evidence" value="ECO:0007669"/>
    <property type="project" value="UniProtKB-UniRule"/>
</dbReference>
<dbReference type="Gene3D" id="3.30.1360.40">
    <property type="match status" value="1"/>
</dbReference>
<dbReference type="Gene3D" id="1.10.10.10">
    <property type="entry name" value="Winged helix-like DNA-binding domain superfamily/Winged helix DNA-binding domain"/>
    <property type="match status" value="1"/>
</dbReference>
<dbReference type="HAMAP" id="MF_00173">
    <property type="entry name" value="Arg_repressor"/>
    <property type="match status" value="1"/>
</dbReference>
<dbReference type="InterPro" id="IPR001669">
    <property type="entry name" value="Arg_repress"/>
</dbReference>
<dbReference type="InterPro" id="IPR020899">
    <property type="entry name" value="Arg_repress_C"/>
</dbReference>
<dbReference type="InterPro" id="IPR036251">
    <property type="entry name" value="Arg_repress_C_sf"/>
</dbReference>
<dbReference type="InterPro" id="IPR020900">
    <property type="entry name" value="Arg_repress_DNA-bd"/>
</dbReference>
<dbReference type="InterPro" id="IPR036388">
    <property type="entry name" value="WH-like_DNA-bd_sf"/>
</dbReference>
<dbReference type="InterPro" id="IPR036390">
    <property type="entry name" value="WH_DNA-bd_sf"/>
</dbReference>
<dbReference type="NCBIfam" id="TIGR01529">
    <property type="entry name" value="argR_whole"/>
    <property type="match status" value="1"/>
</dbReference>
<dbReference type="NCBIfam" id="NF003281">
    <property type="entry name" value="PRK04280.1"/>
    <property type="match status" value="1"/>
</dbReference>
<dbReference type="PANTHER" id="PTHR34471">
    <property type="entry name" value="ARGININE REPRESSOR"/>
    <property type="match status" value="1"/>
</dbReference>
<dbReference type="PANTHER" id="PTHR34471:SF1">
    <property type="entry name" value="ARGININE REPRESSOR"/>
    <property type="match status" value="1"/>
</dbReference>
<dbReference type="Pfam" id="PF01316">
    <property type="entry name" value="Arg_repressor"/>
    <property type="match status" value="1"/>
</dbReference>
<dbReference type="Pfam" id="PF02863">
    <property type="entry name" value="Arg_repressor_C"/>
    <property type="match status" value="1"/>
</dbReference>
<dbReference type="PRINTS" id="PR01467">
    <property type="entry name" value="ARGREPRESSOR"/>
</dbReference>
<dbReference type="SUPFAM" id="SSF55252">
    <property type="entry name" value="C-terminal domain of arginine repressor"/>
    <property type="match status" value="1"/>
</dbReference>
<dbReference type="SUPFAM" id="SSF46785">
    <property type="entry name" value="Winged helix' DNA-binding domain"/>
    <property type="match status" value="1"/>
</dbReference>
<comment type="function">
    <text evidence="1">Regulates arginine biosynthesis genes.</text>
</comment>
<comment type="pathway">
    <text>Amino-acid biosynthesis; L-arginine biosynthesis [regulation].</text>
</comment>
<comment type="subcellular location">
    <subcellularLocation>
        <location evidence="1">Cytoplasm</location>
    </subcellularLocation>
</comment>
<comment type="similarity">
    <text evidence="1">Belongs to the ArgR family.</text>
</comment>
<comment type="sequence caution" evidence="2">
    <conflict type="erroneous initiation">
        <sequence resource="EMBL-CDS" id="AAO04800"/>
    </conflict>
</comment>
<keyword id="KW-0028">Amino-acid biosynthesis</keyword>
<keyword id="KW-0055">Arginine biosynthesis</keyword>
<keyword id="KW-0963">Cytoplasm</keyword>
<keyword id="KW-0238">DNA-binding</keyword>
<keyword id="KW-0678">Repressor</keyword>
<keyword id="KW-0804">Transcription</keyword>
<keyword id="KW-0805">Transcription regulation</keyword>
<name>ARGR_STAES</name>
<sequence length="150" mass="17128">MPKKSVRHIKIREIISNEQIETQDELVKRLNEYDLNVTQATVSRDIKELQLIKVPAPTGQYVYSLPNDRRYHPLEKLGRYLMDSFVNIEGTGNLLVLKTLPGNAQSIGAILDQIDWDEVLGTICGDDTCLLICRDEEASEEIKTRIFNLL</sequence>
<reference key="1">
    <citation type="journal article" date="2003" name="Mol. Microbiol.">
        <title>Genome-based analysis of virulence genes in a non-biofilm-forming Staphylococcus epidermidis strain (ATCC 12228).</title>
        <authorList>
            <person name="Zhang Y.-Q."/>
            <person name="Ren S.-X."/>
            <person name="Li H.-L."/>
            <person name="Wang Y.-X."/>
            <person name="Fu G."/>
            <person name="Yang J."/>
            <person name="Qin Z.-Q."/>
            <person name="Miao Y.-G."/>
            <person name="Wang W.-Y."/>
            <person name="Chen R.-S."/>
            <person name="Shen Y."/>
            <person name="Chen Z."/>
            <person name="Yuan Z.-H."/>
            <person name="Zhao G.-P."/>
            <person name="Qu D."/>
            <person name="Danchin A."/>
            <person name="Wen Y.-M."/>
        </authorList>
    </citation>
    <scope>NUCLEOTIDE SEQUENCE [LARGE SCALE GENOMIC DNA]</scope>
    <source>
        <strain>ATCC 12228 / FDA PCI 1200</strain>
    </source>
</reference>
<organism>
    <name type="scientific">Staphylococcus epidermidis (strain ATCC 12228 / FDA PCI 1200)</name>
    <dbReference type="NCBI Taxonomy" id="176280"/>
    <lineage>
        <taxon>Bacteria</taxon>
        <taxon>Bacillati</taxon>
        <taxon>Bacillota</taxon>
        <taxon>Bacilli</taxon>
        <taxon>Bacillales</taxon>
        <taxon>Staphylococcaceae</taxon>
        <taxon>Staphylococcus</taxon>
    </lineage>
</organism>